<name>NDUF7_XENLA</name>
<evidence type="ECO:0000250" key="1">
    <source>
        <dbReference type="UniProtKB" id="Q7L592"/>
    </source>
</evidence>
<evidence type="ECO:0000255" key="2"/>
<evidence type="ECO:0000305" key="3"/>
<proteinExistence type="evidence at transcript level"/>
<dbReference type="EC" id="2.1.1.320" evidence="1"/>
<dbReference type="EMBL" id="BC072911">
    <property type="protein sequence ID" value="AAH72911.1"/>
    <property type="molecule type" value="mRNA"/>
</dbReference>
<dbReference type="RefSeq" id="NP_001085543.1">
    <property type="nucleotide sequence ID" value="NM_001092074.1"/>
</dbReference>
<dbReference type="SMR" id="Q6GQ37"/>
<dbReference type="DNASU" id="443969"/>
<dbReference type="GeneID" id="443969"/>
<dbReference type="KEGG" id="xla:443969"/>
<dbReference type="AGR" id="Xenbase:XB-GENE-996605"/>
<dbReference type="CTD" id="443969"/>
<dbReference type="Xenbase" id="XB-GENE-996605">
    <property type="gene designation" value="ndufaf7.S"/>
</dbReference>
<dbReference type="OMA" id="YYHPQRN"/>
<dbReference type="OrthoDB" id="438553at2759"/>
<dbReference type="Proteomes" id="UP000186698">
    <property type="component" value="Chromosome 5S"/>
</dbReference>
<dbReference type="Bgee" id="443969">
    <property type="expression patterns" value="Expressed in egg cell and 19 other cell types or tissues"/>
</dbReference>
<dbReference type="GO" id="GO:0005739">
    <property type="term" value="C:mitochondrion"/>
    <property type="evidence" value="ECO:0000250"/>
    <property type="project" value="UniProtKB"/>
</dbReference>
<dbReference type="GO" id="GO:0035243">
    <property type="term" value="F:protein-arginine omega-N symmetric methyltransferase activity"/>
    <property type="evidence" value="ECO:0000250"/>
    <property type="project" value="UniProtKB"/>
</dbReference>
<dbReference type="GO" id="GO:0032981">
    <property type="term" value="P:mitochondrial respiratory chain complex I assembly"/>
    <property type="evidence" value="ECO:0000250"/>
    <property type="project" value="UniProtKB"/>
</dbReference>
<dbReference type="GO" id="GO:0019918">
    <property type="term" value="P:peptidyl-arginine methylation, to symmetrical-dimethyl arginine"/>
    <property type="evidence" value="ECO:0000250"/>
    <property type="project" value="UniProtKB"/>
</dbReference>
<dbReference type="FunFam" id="3.40.50.12710:FF:000001">
    <property type="entry name" value="Protein arginine methyltransferase NDUFAF7"/>
    <property type="match status" value="1"/>
</dbReference>
<dbReference type="Gene3D" id="3.40.50.12710">
    <property type="match status" value="1"/>
</dbReference>
<dbReference type="InterPro" id="IPR003788">
    <property type="entry name" value="NDUFAF7"/>
</dbReference>
<dbReference type="InterPro" id="IPR038375">
    <property type="entry name" value="NDUFAF7_sf"/>
</dbReference>
<dbReference type="InterPro" id="IPR029063">
    <property type="entry name" value="SAM-dependent_MTases_sf"/>
</dbReference>
<dbReference type="PANTHER" id="PTHR12049">
    <property type="entry name" value="PROTEIN ARGININE METHYLTRANSFERASE NDUFAF7, MITOCHONDRIAL"/>
    <property type="match status" value="1"/>
</dbReference>
<dbReference type="PANTHER" id="PTHR12049:SF7">
    <property type="entry name" value="PROTEIN ARGININE METHYLTRANSFERASE NDUFAF7, MITOCHONDRIAL"/>
    <property type="match status" value="1"/>
</dbReference>
<dbReference type="Pfam" id="PF02636">
    <property type="entry name" value="Methyltransf_28"/>
    <property type="match status" value="1"/>
</dbReference>
<dbReference type="SUPFAM" id="SSF53335">
    <property type="entry name" value="S-adenosyl-L-methionine-dependent methyltransferases"/>
    <property type="match status" value="1"/>
</dbReference>
<gene>
    <name evidence="1" type="primary">ndufaf7</name>
</gene>
<protein>
    <recommendedName>
        <fullName evidence="1">Protein arginine methyltransferase NDUFAF7, mitochondrial</fullName>
        <ecNumber evidence="1">2.1.1.320</ecNumber>
    </recommendedName>
    <alternativeName>
        <fullName evidence="1">NADH dehydrogenase [ubiquinone] complex I, assembly factor 7</fullName>
    </alternativeName>
    <alternativeName>
        <fullName evidence="1">Protein midA homolog</fullName>
    </alternativeName>
</protein>
<feature type="transit peptide" description="Mitochondrion" evidence="2">
    <location>
        <begin position="1"/>
        <end position="42"/>
    </location>
</feature>
<feature type="chain" id="PRO_0000315676" description="Protein arginine methyltransferase NDUFAF7, mitochondrial">
    <location>
        <begin position="43"/>
        <end position="437"/>
    </location>
</feature>
<keyword id="KW-0489">Methyltransferase</keyword>
<keyword id="KW-0496">Mitochondrion</keyword>
<keyword id="KW-1185">Reference proteome</keyword>
<keyword id="KW-0808">Transferase</keyword>
<keyword id="KW-0809">Transit peptide</keyword>
<accession>Q6GQ37</accession>
<organism>
    <name type="scientific">Xenopus laevis</name>
    <name type="common">African clawed frog</name>
    <dbReference type="NCBI Taxonomy" id="8355"/>
    <lineage>
        <taxon>Eukaryota</taxon>
        <taxon>Metazoa</taxon>
        <taxon>Chordata</taxon>
        <taxon>Craniata</taxon>
        <taxon>Vertebrata</taxon>
        <taxon>Euteleostomi</taxon>
        <taxon>Amphibia</taxon>
        <taxon>Batrachia</taxon>
        <taxon>Anura</taxon>
        <taxon>Pipoidea</taxon>
        <taxon>Pipidae</taxon>
        <taxon>Xenopodinae</taxon>
        <taxon>Xenopus</taxon>
        <taxon>Xenopus</taxon>
    </lineage>
</organism>
<reference key="1">
    <citation type="submission" date="2004-06" db="EMBL/GenBank/DDBJ databases">
        <authorList>
            <consortium name="NIH - Xenopus Gene Collection (XGC) project"/>
        </authorList>
    </citation>
    <scope>NUCLEOTIDE SEQUENCE [LARGE SCALE MRNA]</scope>
    <source>
        <tissue>Ovary</tissue>
    </source>
</reference>
<comment type="function">
    <text evidence="1">Arginine methyltransferase involved in the assembly or stability of mitochondrial NADH:ubiquinone oxidoreductase complex (complex I). Acts by mediating symmetric dimethylation of 'Arg-118' of ndufs2 after it assembles into the complex I, stabilizing the early intermediate complex.</text>
</comment>
<comment type="catalytic activity">
    <reaction evidence="1">
        <text>L-arginyl-[protein] + 2 S-adenosyl-L-methionine = N(omega),N(omega)'-dimethyl-L-arginyl-[protein] + 2 S-adenosyl-L-homocysteine + 2 H(+)</text>
        <dbReference type="Rhea" id="RHEA:48108"/>
        <dbReference type="Rhea" id="RHEA-COMP:10532"/>
        <dbReference type="Rhea" id="RHEA-COMP:11992"/>
        <dbReference type="ChEBI" id="CHEBI:15378"/>
        <dbReference type="ChEBI" id="CHEBI:29965"/>
        <dbReference type="ChEBI" id="CHEBI:57856"/>
        <dbReference type="ChEBI" id="CHEBI:59789"/>
        <dbReference type="ChEBI" id="CHEBI:88221"/>
        <dbReference type="EC" id="2.1.1.320"/>
    </reaction>
</comment>
<comment type="subcellular location">
    <subcellularLocation>
        <location evidence="1">Mitochondrion</location>
    </subcellularLocation>
</comment>
<comment type="similarity">
    <text evidence="3">Belongs to the NDUFAF7 family.</text>
</comment>
<sequence>MSGLARLQRLQKFGFLMVSASANRPIQRYQCSRTEKPQKRTSANALLNHLIFKIKSTGPITVSEYMREVLTNPVKGYYMHNDMLGEHGDFVTSPEISQIFGELLGVWCISEWVSAGKPKAIQLVELGPGRGTLTDDLLRVFSNFGRLLDSCDISVHLVEVSPKLSDIQAQRLTGKSIEVELDSNSPVYKNGITKTGRPVCWYQDIQDVPNGYSFYIAHEFFDALPIHKLQKIKDGWREMLIDIDPKLPDKLRFVLGSNMSLVAKTFVQDDEPRDHVEVCPSAAVIIQKLAQQINSYGGAALIADYGHMGEKTDTFRGFRAHQLHDVLTDPGTADLTADVDFNFMRRMVGEAASCLGPVTQHVFLKNMGIDIRLKVLLEKSNDVTVQKQLIHGYNVLMNPDQMGQRFKFFSVVPHSRLKNTLKTKMPPVAGFSTLLMT</sequence>